<name>RBL_CAJCA</name>
<geneLocation type="chloroplast"/>
<sequence length="473" mass="52392">MSPQTETKASVGFKAGVKDYKLTYYTPQYQTKDTDILAAFRVTPQPGVPPEEAGAAVAAESSTGTWTTVWTDGLTSLDRYKGRCYHIEPVAGEENQFIAYVAYPLDLFEEGSVTNMFTSIVGNVFGFKALRALRLEDLRIPISYVKTFQGPPHGIQVERDKLNKYGRPLLGCTIKPKLGLSAKNYGRAVYECLRGGLDFTKDDENVNSQPFMRWRDRFLFCAEALFKAQAETGEIKGHYLNATAGTCEEMIKRAVFARELGVPIIMHDYLTGGFTANTSLAHYCRDNGLLLHIHRAMHAVIDRQKNHGMHFRVLAKALRLSGGDHVHSGTVVGKLEGEREITLGFVDLLRDDFVEKDRSRGIYFTQDWVSLPGVLPVASGGIHVWHMPALTEIFGDDSVLQFGGGTLGHPWGNAPGAVANRVALEACVQARNEGRDLAREGNEIIREASKWSPELAAACEVWKAIKFEFPAMD</sequence>
<feature type="propeptide" id="PRO_0000031151" evidence="1">
    <location>
        <begin position="1"/>
        <end position="2"/>
    </location>
</feature>
<feature type="chain" id="PRO_0000031152" description="Ribulose bisphosphate carboxylase large chain">
    <location>
        <begin position="3"/>
        <end position="473"/>
    </location>
</feature>
<feature type="active site" description="Proton acceptor" evidence="1">
    <location>
        <position position="175"/>
    </location>
</feature>
<feature type="active site" description="Proton acceptor" evidence="1">
    <location>
        <position position="294"/>
    </location>
</feature>
<feature type="binding site" description="in homodimeric partner" evidence="1">
    <location>
        <position position="123"/>
    </location>
    <ligand>
        <name>substrate</name>
    </ligand>
</feature>
<feature type="binding site" evidence="1">
    <location>
        <position position="173"/>
    </location>
    <ligand>
        <name>substrate</name>
    </ligand>
</feature>
<feature type="binding site" evidence="1">
    <location>
        <position position="177"/>
    </location>
    <ligand>
        <name>substrate</name>
    </ligand>
</feature>
<feature type="binding site" description="via carbamate group" evidence="1">
    <location>
        <position position="201"/>
    </location>
    <ligand>
        <name>Mg(2+)</name>
        <dbReference type="ChEBI" id="CHEBI:18420"/>
    </ligand>
</feature>
<feature type="binding site" evidence="1">
    <location>
        <position position="203"/>
    </location>
    <ligand>
        <name>Mg(2+)</name>
        <dbReference type="ChEBI" id="CHEBI:18420"/>
    </ligand>
</feature>
<feature type="binding site" evidence="1">
    <location>
        <position position="204"/>
    </location>
    <ligand>
        <name>Mg(2+)</name>
        <dbReference type="ChEBI" id="CHEBI:18420"/>
    </ligand>
</feature>
<feature type="binding site" evidence="1">
    <location>
        <position position="295"/>
    </location>
    <ligand>
        <name>substrate</name>
    </ligand>
</feature>
<feature type="binding site" evidence="1">
    <location>
        <position position="327"/>
    </location>
    <ligand>
        <name>substrate</name>
    </ligand>
</feature>
<feature type="binding site" evidence="1">
    <location>
        <position position="379"/>
    </location>
    <ligand>
        <name>substrate</name>
    </ligand>
</feature>
<feature type="site" description="Transition state stabilizer" evidence="1">
    <location>
        <position position="334"/>
    </location>
</feature>
<feature type="modified residue" description="N-acetylproline" evidence="1">
    <location>
        <position position="3"/>
    </location>
</feature>
<feature type="modified residue" description="N6,N6,N6-trimethyllysine" evidence="1">
    <location>
        <position position="14"/>
    </location>
</feature>
<feature type="modified residue" description="N6-carboxylysine" evidence="1">
    <location>
        <position position="201"/>
    </location>
</feature>
<feature type="disulfide bond" description="Interchain; in linked form" evidence="1">
    <location>
        <position position="247"/>
    </location>
</feature>
<evidence type="ECO:0000255" key="1">
    <source>
        <dbReference type="HAMAP-Rule" id="MF_01338"/>
    </source>
</evidence>
<protein>
    <recommendedName>
        <fullName evidence="1">Ribulose bisphosphate carboxylase large chain</fullName>
        <shortName evidence="1">RuBisCO large subunit</shortName>
        <ecNumber evidence="1">4.1.1.39</ecNumber>
    </recommendedName>
</protein>
<reference key="1">
    <citation type="submission" date="1997-05" db="EMBL/GenBank/DDBJ databases">
        <authorList>
            <person name="Kaess E."/>
            <person name="Wink M."/>
        </authorList>
    </citation>
    <scope>NUCLEOTIDE SEQUENCE [GENOMIC DNA]</scope>
    <source>
        <tissue>Leaf</tissue>
    </source>
</reference>
<proteinExistence type="inferred from homology"/>
<accession>O63094</accession>
<keyword id="KW-0007">Acetylation</keyword>
<keyword id="KW-0113">Calvin cycle</keyword>
<keyword id="KW-0120">Carbon dioxide fixation</keyword>
<keyword id="KW-0150">Chloroplast</keyword>
<keyword id="KW-1015">Disulfide bond</keyword>
<keyword id="KW-0456">Lyase</keyword>
<keyword id="KW-0460">Magnesium</keyword>
<keyword id="KW-0479">Metal-binding</keyword>
<keyword id="KW-0488">Methylation</keyword>
<keyword id="KW-0503">Monooxygenase</keyword>
<keyword id="KW-0560">Oxidoreductase</keyword>
<keyword id="KW-0601">Photorespiration</keyword>
<keyword id="KW-0602">Photosynthesis</keyword>
<keyword id="KW-0934">Plastid</keyword>
<comment type="function">
    <text evidence="1">RuBisCO catalyzes two reactions: the carboxylation of D-ribulose 1,5-bisphosphate, the primary event in carbon dioxide fixation, as well as the oxidative fragmentation of the pentose substrate in the photorespiration process. Both reactions occur simultaneously and in competition at the same active site.</text>
</comment>
<comment type="catalytic activity">
    <reaction evidence="1">
        <text>2 (2R)-3-phosphoglycerate + 2 H(+) = D-ribulose 1,5-bisphosphate + CO2 + H2O</text>
        <dbReference type="Rhea" id="RHEA:23124"/>
        <dbReference type="ChEBI" id="CHEBI:15377"/>
        <dbReference type="ChEBI" id="CHEBI:15378"/>
        <dbReference type="ChEBI" id="CHEBI:16526"/>
        <dbReference type="ChEBI" id="CHEBI:57870"/>
        <dbReference type="ChEBI" id="CHEBI:58272"/>
        <dbReference type="EC" id="4.1.1.39"/>
    </reaction>
</comment>
<comment type="catalytic activity">
    <reaction evidence="1">
        <text>D-ribulose 1,5-bisphosphate + O2 = 2-phosphoglycolate + (2R)-3-phosphoglycerate + 2 H(+)</text>
        <dbReference type="Rhea" id="RHEA:36631"/>
        <dbReference type="ChEBI" id="CHEBI:15378"/>
        <dbReference type="ChEBI" id="CHEBI:15379"/>
        <dbReference type="ChEBI" id="CHEBI:57870"/>
        <dbReference type="ChEBI" id="CHEBI:58033"/>
        <dbReference type="ChEBI" id="CHEBI:58272"/>
    </reaction>
</comment>
<comment type="cofactor">
    <cofactor evidence="1">
        <name>Mg(2+)</name>
        <dbReference type="ChEBI" id="CHEBI:18420"/>
    </cofactor>
    <text evidence="1">Binds 1 Mg(2+) ion per subunit.</text>
</comment>
<comment type="subunit">
    <text evidence="1">Heterohexadecamer of 8 large chains and 8 small chains; disulfide-linked. The disulfide link is formed within the large subunit homodimers.</text>
</comment>
<comment type="subcellular location">
    <subcellularLocation>
        <location>Plastid</location>
        <location>Chloroplast</location>
    </subcellularLocation>
</comment>
<comment type="PTM">
    <text evidence="1">The disulfide bond which can form in the large chain dimeric partners within the hexadecamer appears to be associated with oxidative stress and protein turnover.</text>
</comment>
<comment type="miscellaneous">
    <text evidence="1">The basic functional RuBisCO is composed of a large chain homodimer in a 'head-to-tail' conformation. In form I RuBisCO this homodimer is arranged in a barrel-like tetramer with the small subunits forming a tetrameric 'cap' on each end of the 'barrel'.</text>
</comment>
<comment type="similarity">
    <text evidence="1">Belongs to the RuBisCO large chain family. Type I subfamily.</text>
</comment>
<organism>
    <name type="scientific">Cajanus cajan</name>
    <name type="common">Pigeon pea</name>
    <name type="synonym">Cajanus indicus</name>
    <dbReference type="NCBI Taxonomy" id="3821"/>
    <lineage>
        <taxon>Eukaryota</taxon>
        <taxon>Viridiplantae</taxon>
        <taxon>Streptophyta</taxon>
        <taxon>Embryophyta</taxon>
        <taxon>Tracheophyta</taxon>
        <taxon>Spermatophyta</taxon>
        <taxon>Magnoliopsida</taxon>
        <taxon>eudicotyledons</taxon>
        <taxon>Gunneridae</taxon>
        <taxon>Pentapetalae</taxon>
        <taxon>rosids</taxon>
        <taxon>fabids</taxon>
        <taxon>Fabales</taxon>
        <taxon>Fabaceae</taxon>
        <taxon>Papilionoideae</taxon>
        <taxon>50 kb inversion clade</taxon>
        <taxon>NPAAA clade</taxon>
        <taxon>indigoferoid/millettioid clade</taxon>
        <taxon>Phaseoleae</taxon>
        <taxon>Cajanus</taxon>
    </lineage>
</organism>
<gene>
    <name evidence="1" type="primary">rbcL</name>
</gene>
<dbReference type="EC" id="4.1.1.39" evidence="1"/>
<dbReference type="EMBL" id="Z95535">
    <property type="protein sequence ID" value="CAB08861.1"/>
    <property type="molecule type" value="Genomic_DNA"/>
</dbReference>
<dbReference type="SMR" id="O63094"/>
<dbReference type="GO" id="GO:0009507">
    <property type="term" value="C:chloroplast"/>
    <property type="evidence" value="ECO:0007669"/>
    <property type="project" value="UniProtKB-SubCell"/>
</dbReference>
<dbReference type="GO" id="GO:0000287">
    <property type="term" value="F:magnesium ion binding"/>
    <property type="evidence" value="ECO:0007669"/>
    <property type="project" value="UniProtKB-UniRule"/>
</dbReference>
<dbReference type="GO" id="GO:0004497">
    <property type="term" value="F:monooxygenase activity"/>
    <property type="evidence" value="ECO:0007669"/>
    <property type="project" value="UniProtKB-KW"/>
</dbReference>
<dbReference type="GO" id="GO:0016984">
    <property type="term" value="F:ribulose-bisphosphate carboxylase activity"/>
    <property type="evidence" value="ECO:0007669"/>
    <property type="project" value="UniProtKB-UniRule"/>
</dbReference>
<dbReference type="GO" id="GO:0009853">
    <property type="term" value="P:photorespiration"/>
    <property type="evidence" value="ECO:0007669"/>
    <property type="project" value="UniProtKB-KW"/>
</dbReference>
<dbReference type="GO" id="GO:0019253">
    <property type="term" value="P:reductive pentose-phosphate cycle"/>
    <property type="evidence" value="ECO:0007669"/>
    <property type="project" value="UniProtKB-UniRule"/>
</dbReference>
<dbReference type="CDD" id="cd08212">
    <property type="entry name" value="RuBisCO_large_I"/>
    <property type="match status" value="1"/>
</dbReference>
<dbReference type="FunFam" id="3.20.20.110:FF:000001">
    <property type="entry name" value="Ribulose bisphosphate carboxylase large chain"/>
    <property type="match status" value="1"/>
</dbReference>
<dbReference type="FunFam" id="3.30.70.150:FF:000001">
    <property type="entry name" value="Ribulose bisphosphate carboxylase large chain"/>
    <property type="match status" value="1"/>
</dbReference>
<dbReference type="Gene3D" id="3.20.20.110">
    <property type="entry name" value="Ribulose bisphosphate carboxylase, large subunit, C-terminal domain"/>
    <property type="match status" value="1"/>
</dbReference>
<dbReference type="Gene3D" id="3.30.70.150">
    <property type="entry name" value="RuBisCO large subunit, N-terminal domain"/>
    <property type="match status" value="1"/>
</dbReference>
<dbReference type="HAMAP" id="MF_01338">
    <property type="entry name" value="RuBisCO_L_type1"/>
    <property type="match status" value="1"/>
</dbReference>
<dbReference type="InterPro" id="IPR033966">
    <property type="entry name" value="RuBisCO"/>
</dbReference>
<dbReference type="InterPro" id="IPR020878">
    <property type="entry name" value="RuBisCo_large_chain_AS"/>
</dbReference>
<dbReference type="InterPro" id="IPR000685">
    <property type="entry name" value="RuBisCO_lsu_C"/>
</dbReference>
<dbReference type="InterPro" id="IPR036376">
    <property type="entry name" value="RuBisCO_lsu_C_sf"/>
</dbReference>
<dbReference type="InterPro" id="IPR017443">
    <property type="entry name" value="RuBisCO_lsu_fd_N"/>
</dbReference>
<dbReference type="InterPro" id="IPR036422">
    <property type="entry name" value="RuBisCO_lsu_N_sf"/>
</dbReference>
<dbReference type="InterPro" id="IPR020888">
    <property type="entry name" value="RuBisCO_lsuI"/>
</dbReference>
<dbReference type="NCBIfam" id="NF003252">
    <property type="entry name" value="PRK04208.1"/>
    <property type="match status" value="1"/>
</dbReference>
<dbReference type="PANTHER" id="PTHR42704">
    <property type="entry name" value="RIBULOSE BISPHOSPHATE CARBOXYLASE"/>
    <property type="match status" value="1"/>
</dbReference>
<dbReference type="PANTHER" id="PTHR42704:SF15">
    <property type="entry name" value="RIBULOSE BISPHOSPHATE CARBOXYLASE LARGE CHAIN"/>
    <property type="match status" value="1"/>
</dbReference>
<dbReference type="Pfam" id="PF00016">
    <property type="entry name" value="RuBisCO_large"/>
    <property type="match status" value="1"/>
</dbReference>
<dbReference type="Pfam" id="PF02788">
    <property type="entry name" value="RuBisCO_large_N"/>
    <property type="match status" value="1"/>
</dbReference>
<dbReference type="SFLD" id="SFLDG01052">
    <property type="entry name" value="RuBisCO"/>
    <property type="match status" value="1"/>
</dbReference>
<dbReference type="SFLD" id="SFLDS00014">
    <property type="entry name" value="RuBisCO"/>
    <property type="match status" value="1"/>
</dbReference>
<dbReference type="SFLD" id="SFLDG00301">
    <property type="entry name" value="RuBisCO-like_proteins"/>
    <property type="match status" value="1"/>
</dbReference>
<dbReference type="SUPFAM" id="SSF51649">
    <property type="entry name" value="RuBisCo, C-terminal domain"/>
    <property type="match status" value="1"/>
</dbReference>
<dbReference type="SUPFAM" id="SSF54966">
    <property type="entry name" value="RuBisCO, large subunit, small (N-terminal) domain"/>
    <property type="match status" value="1"/>
</dbReference>
<dbReference type="PROSITE" id="PS00157">
    <property type="entry name" value="RUBISCO_LARGE"/>
    <property type="match status" value="1"/>
</dbReference>